<accession>Q0V9S9</accession>
<gene>
    <name type="primary">drc7</name>
    <name type="synonym">ccdc135</name>
</gene>
<comment type="function">
    <text evidence="1 2">Component of the nexin-dynein regulatory complex (N-DRC) a key regulator of ciliary/flagellar motility which maintains the alignment and integrity of the distal axoneme and regulates microtubule sliding in motile axonemes (By similarity). Involved in the regulation of flagellar motility (By similarity). Essential for male fertility, sperm head morphogenesis and sperm flagellum formation (By similarity).</text>
</comment>
<comment type="subunit">
    <text evidence="1">Component of the nexin-dynein regulatory complex (N-DRC).</text>
</comment>
<comment type="subcellular location">
    <subcellularLocation>
        <location evidence="1">Cell projection</location>
        <location evidence="1">Cilium</location>
        <location evidence="1">Flagellum</location>
    </subcellularLocation>
    <subcellularLocation>
        <location evidence="1">Cytoplasm</location>
        <location evidence="1">Cytoskeleton</location>
        <location evidence="1">Cilium axoneme</location>
    </subcellularLocation>
    <subcellularLocation>
        <location evidence="1">Cytoplasm</location>
        <location evidence="1">Cytoskeleton</location>
        <location evidence="1">Flagellum axoneme</location>
    </subcellularLocation>
    <text evidence="1">Associated with the outer doublet microtubules (OD).</text>
</comment>
<comment type="similarity">
    <text evidence="5">Belongs to the DRC7 family.</text>
</comment>
<keyword id="KW-0966">Cell projection</keyword>
<keyword id="KW-0969">Cilium</keyword>
<keyword id="KW-0175">Coiled coil</keyword>
<keyword id="KW-0963">Cytoplasm</keyword>
<keyword id="KW-0206">Cytoskeleton</keyword>
<keyword id="KW-0221">Differentiation</keyword>
<keyword id="KW-0282">Flagellum</keyword>
<keyword id="KW-1185">Reference proteome</keyword>
<keyword id="KW-0744">Spermatogenesis</keyword>
<dbReference type="EMBL" id="BC121408">
    <property type="protein sequence ID" value="AAI21409.1"/>
    <property type="molecule type" value="mRNA"/>
</dbReference>
<dbReference type="RefSeq" id="NP_001072331.1">
    <property type="nucleotide sequence ID" value="NM_001078863.1"/>
</dbReference>
<dbReference type="RefSeq" id="XP_012816760.2">
    <property type="nucleotide sequence ID" value="XM_012961306.3"/>
</dbReference>
<dbReference type="RefSeq" id="XP_012816761.2">
    <property type="nucleotide sequence ID" value="XM_012961307.3"/>
</dbReference>
<dbReference type="RefSeq" id="XP_031756053.1">
    <property type="nucleotide sequence ID" value="XM_031900193.1"/>
</dbReference>
<dbReference type="RefSeq" id="XP_031756054.1">
    <property type="nucleotide sequence ID" value="XM_031900194.1"/>
</dbReference>
<dbReference type="SMR" id="Q0V9S9"/>
<dbReference type="FunCoup" id="Q0V9S9">
    <property type="interactions" value="86"/>
</dbReference>
<dbReference type="STRING" id="8364.ENSXETP00000020454"/>
<dbReference type="PaxDb" id="8364-ENSXETP00000030143"/>
<dbReference type="DNASU" id="779784"/>
<dbReference type="GeneID" id="779784"/>
<dbReference type="KEGG" id="xtr:779784"/>
<dbReference type="AGR" id="Xenbase:XB-GENE-959992"/>
<dbReference type="CTD" id="84229"/>
<dbReference type="Xenbase" id="XB-GENE-959992">
    <property type="gene designation" value="drc7"/>
</dbReference>
<dbReference type="eggNOG" id="ENOG502QRNZ">
    <property type="taxonomic scope" value="Eukaryota"/>
</dbReference>
<dbReference type="InParanoid" id="Q0V9S9"/>
<dbReference type="OMA" id="CRDDYIT"/>
<dbReference type="OrthoDB" id="10262874at2759"/>
<dbReference type="Proteomes" id="UP000008143">
    <property type="component" value="Chromosome 4"/>
</dbReference>
<dbReference type="Bgee" id="ENSXETG00000013759">
    <property type="expression patterns" value="Expressed in testis and 11 other cell types or tissues"/>
</dbReference>
<dbReference type="GO" id="GO:0005737">
    <property type="term" value="C:cytoplasm"/>
    <property type="evidence" value="ECO:0007669"/>
    <property type="project" value="UniProtKB-KW"/>
</dbReference>
<dbReference type="GO" id="GO:0005856">
    <property type="term" value="C:cytoskeleton"/>
    <property type="evidence" value="ECO:0007669"/>
    <property type="project" value="UniProtKB-KW"/>
</dbReference>
<dbReference type="GO" id="GO:0031514">
    <property type="term" value="C:motile cilium"/>
    <property type="evidence" value="ECO:0007669"/>
    <property type="project" value="UniProtKB-SubCell"/>
</dbReference>
<dbReference type="GO" id="GO:0030317">
    <property type="term" value="P:flagellated sperm motility"/>
    <property type="evidence" value="ECO:0000250"/>
    <property type="project" value="UniProtKB"/>
</dbReference>
<dbReference type="GO" id="GO:0007288">
    <property type="term" value="P:sperm axoneme assembly"/>
    <property type="evidence" value="ECO:0000250"/>
    <property type="project" value="UniProtKB"/>
</dbReference>
<dbReference type="GO" id="GO:0007283">
    <property type="term" value="P:spermatogenesis"/>
    <property type="evidence" value="ECO:0000250"/>
    <property type="project" value="UniProtKB"/>
</dbReference>
<dbReference type="InterPro" id="IPR056290">
    <property type="entry name" value="CEPT76/DRC7_peptidase-like_dom"/>
</dbReference>
<dbReference type="InterPro" id="IPR033551">
    <property type="entry name" value="DRC7/lobo"/>
</dbReference>
<dbReference type="InterPro" id="IPR056292">
    <property type="entry name" value="DRC7_C"/>
</dbReference>
<dbReference type="InterPro" id="IPR056291">
    <property type="entry name" value="MORN_DRC7"/>
</dbReference>
<dbReference type="InterPro" id="IPR038765">
    <property type="entry name" value="Papain-like_cys_pep_sf"/>
</dbReference>
<dbReference type="PANTHER" id="PTHR35249">
    <property type="entry name" value="DYNEIN REGULATORY COMPLEX SUBUNIT 7"/>
    <property type="match status" value="1"/>
</dbReference>
<dbReference type="PANTHER" id="PTHR35249:SF2">
    <property type="entry name" value="DYNEIN REGULATORY COMPLEX SUBUNIT 7"/>
    <property type="match status" value="1"/>
</dbReference>
<dbReference type="Pfam" id="PF24656">
    <property type="entry name" value="CEPT76_peptidase"/>
    <property type="match status" value="1"/>
</dbReference>
<dbReference type="Pfam" id="PF24671">
    <property type="entry name" value="DRC7_C"/>
    <property type="match status" value="1"/>
</dbReference>
<dbReference type="Pfam" id="PF24667">
    <property type="entry name" value="MORN_DRC7"/>
    <property type="match status" value="1"/>
</dbReference>
<dbReference type="SUPFAM" id="SSF54001">
    <property type="entry name" value="Cysteine proteinases"/>
    <property type="match status" value="1"/>
</dbReference>
<reference key="1">
    <citation type="submission" date="2006-08" db="EMBL/GenBank/DDBJ databases">
        <authorList>
            <consortium name="NIH - Xenopus Gene Collection (XGC) project"/>
        </authorList>
    </citation>
    <scope>NUCLEOTIDE SEQUENCE [LARGE SCALE MRNA]</scope>
    <source>
        <tissue>Testis</tissue>
    </source>
</reference>
<sequence>MEYLEDNKTETFEEEDKEREEDQVLDSDEVLDSNELNDMQECLSQTDLSNIDNNRAIQQLSLGSMEFPSYTTNSEKEEMLLGLADNFWHQYTHLYPDRKPLFMCPRNECGVEKFVCTTLHPTLLPYSDLYDWDQSAKFVSEYLTMEPLNPPLELPRSLFSSTSVLQKQSGNCFDFSVLLCSLLLGAGYDAYCVSGYATREMCLMDEKRNICPLLNKVEESSWEIPQKPLKKYTVKPPRQLISKFAVQQEAKKQAKMEEALRNEQEEETRLKEDAEKPGPDNLHGLRVHCWVLVLSGKREVPENFFIDALTGKSYATISEPFLGVESVWNHEDYWVNMQDCRNGCKDMKFDLGDPVCWEYLLQGGSKPLLLIPDEEDEEELNGETIQENKTIFQMPPSWVLPIVIRPKEFETRCPQGRKILQYKKAKHEKWAPYLKRDGHVSRLTGYLDTECTQEVKIQDCFQNRKDKLDLREQNKIEQVTTEYFIPGRADSLKVHEYRSLAPETERSMMFYSEARLDGLQRRDEKPVEMTEIYQGRADFLYYRHIVFGKRPKKVAIAGGPTEANPRPILKITERFNRNKEKPANEDVAERTFLLTEDRIQLRCHRKDDHITTSYWEFLKPANLGEKDTPIVLTPETCISYQVEPSEKFSKQLYVYETLVTLQQAEQNSKDNVRKSETEVREILATRAQEEADPQLTISIYDTERNEKSKEKREAMERAIQEERQRRAVQELDYLAPFLAQLGDPEKLTLWQAQKVKEDCLSDMKQRLIEKANLIQARFEKETQELQKKQQWYHQNQMSMSKEDEEAYLDYCSEAMFRIHILETRLNRHKDLAPQKYLALEDRLNKDPRLREPFLTS</sequence>
<organism>
    <name type="scientific">Xenopus tropicalis</name>
    <name type="common">Western clawed frog</name>
    <name type="synonym">Silurana tropicalis</name>
    <dbReference type="NCBI Taxonomy" id="8364"/>
    <lineage>
        <taxon>Eukaryota</taxon>
        <taxon>Metazoa</taxon>
        <taxon>Chordata</taxon>
        <taxon>Craniata</taxon>
        <taxon>Vertebrata</taxon>
        <taxon>Euteleostomi</taxon>
        <taxon>Amphibia</taxon>
        <taxon>Batrachia</taxon>
        <taxon>Anura</taxon>
        <taxon>Pipoidea</taxon>
        <taxon>Pipidae</taxon>
        <taxon>Xenopodinae</taxon>
        <taxon>Xenopus</taxon>
        <taxon>Silurana</taxon>
    </lineage>
</organism>
<feature type="chain" id="PRO_0000279437" description="Dynein regulatory complex subunit 7">
    <location>
        <begin position="1"/>
        <end position="856"/>
    </location>
</feature>
<feature type="region of interest" description="Disordered" evidence="4">
    <location>
        <begin position="1"/>
        <end position="30"/>
    </location>
</feature>
<feature type="region of interest" description="Disordered" evidence="4">
    <location>
        <begin position="255"/>
        <end position="277"/>
    </location>
</feature>
<feature type="coiled-coil region" evidence="3">
    <location>
        <begin position="245"/>
        <end position="276"/>
    </location>
</feature>
<feature type="coiled-coil region" evidence="3">
    <location>
        <begin position="661"/>
        <end position="733"/>
    </location>
</feature>
<feature type="coiled-coil region" evidence="3">
    <location>
        <begin position="764"/>
        <end position="790"/>
    </location>
</feature>
<feature type="compositionally biased region" description="Basic and acidic residues" evidence="4">
    <location>
        <begin position="1"/>
        <end position="11"/>
    </location>
</feature>
<feature type="compositionally biased region" description="Acidic residues" evidence="4">
    <location>
        <begin position="12"/>
        <end position="30"/>
    </location>
</feature>
<proteinExistence type="evidence at transcript level"/>
<protein>
    <recommendedName>
        <fullName>Dynein regulatory complex subunit 7</fullName>
    </recommendedName>
    <alternativeName>
        <fullName>Coiled-coil domain-containing protein 135</fullName>
    </alternativeName>
    <alternativeName>
        <fullName>Coiled-coil domain-containing protein lobo homolog</fullName>
    </alternativeName>
</protein>
<evidence type="ECO:0000250" key="1">
    <source>
        <dbReference type="UniProtKB" id="A8JAM0"/>
    </source>
</evidence>
<evidence type="ECO:0000250" key="2">
    <source>
        <dbReference type="UniProtKB" id="Q6V3W6"/>
    </source>
</evidence>
<evidence type="ECO:0000255" key="3"/>
<evidence type="ECO:0000256" key="4">
    <source>
        <dbReference type="SAM" id="MobiDB-lite"/>
    </source>
</evidence>
<evidence type="ECO:0000305" key="5"/>
<name>DRC7_XENTR</name>